<dbReference type="EC" id="2.7.7.6" evidence="1"/>
<dbReference type="EMBL" id="CP000560">
    <property type="protein sequence ID" value="ABS72556.1"/>
    <property type="molecule type" value="Genomic_DNA"/>
</dbReference>
<dbReference type="RefSeq" id="WP_011996193.1">
    <property type="nucleotide sequence ID" value="NC_009725.2"/>
</dbReference>
<dbReference type="SMR" id="A7Z0N0"/>
<dbReference type="GeneID" id="93079272"/>
<dbReference type="KEGG" id="bay:RBAM_001330"/>
<dbReference type="HOGENOM" id="CLU_000524_3_1_9"/>
<dbReference type="Proteomes" id="UP000001120">
    <property type="component" value="Chromosome"/>
</dbReference>
<dbReference type="GO" id="GO:0000428">
    <property type="term" value="C:DNA-directed RNA polymerase complex"/>
    <property type="evidence" value="ECO:0007669"/>
    <property type="project" value="UniProtKB-KW"/>
</dbReference>
<dbReference type="GO" id="GO:0003677">
    <property type="term" value="F:DNA binding"/>
    <property type="evidence" value="ECO:0007669"/>
    <property type="project" value="UniProtKB-UniRule"/>
</dbReference>
<dbReference type="GO" id="GO:0003899">
    <property type="term" value="F:DNA-directed RNA polymerase activity"/>
    <property type="evidence" value="ECO:0007669"/>
    <property type="project" value="UniProtKB-UniRule"/>
</dbReference>
<dbReference type="GO" id="GO:0000287">
    <property type="term" value="F:magnesium ion binding"/>
    <property type="evidence" value="ECO:0007669"/>
    <property type="project" value="UniProtKB-UniRule"/>
</dbReference>
<dbReference type="GO" id="GO:0008270">
    <property type="term" value="F:zinc ion binding"/>
    <property type="evidence" value="ECO:0007669"/>
    <property type="project" value="UniProtKB-UniRule"/>
</dbReference>
<dbReference type="GO" id="GO:0006351">
    <property type="term" value="P:DNA-templated transcription"/>
    <property type="evidence" value="ECO:0007669"/>
    <property type="project" value="UniProtKB-UniRule"/>
</dbReference>
<dbReference type="CDD" id="cd02655">
    <property type="entry name" value="RNAP_beta'_C"/>
    <property type="match status" value="1"/>
</dbReference>
<dbReference type="CDD" id="cd01609">
    <property type="entry name" value="RNAP_beta'_N"/>
    <property type="match status" value="1"/>
</dbReference>
<dbReference type="FunFam" id="1.10.132.30:FF:000003">
    <property type="entry name" value="DNA-directed RNA polymerase subunit beta"/>
    <property type="match status" value="1"/>
</dbReference>
<dbReference type="FunFam" id="1.10.150.390:FF:000002">
    <property type="entry name" value="DNA-directed RNA polymerase subunit beta"/>
    <property type="match status" value="1"/>
</dbReference>
<dbReference type="FunFam" id="1.10.40.90:FF:000001">
    <property type="entry name" value="DNA-directed RNA polymerase subunit beta"/>
    <property type="match status" value="1"/>
</dbReference>
<dbReference type="FunFam" id="4.10.860.120:FF:000001">
    <property type="entry name" value="DNA-directed RNA polymerase subunit beta"/>
    <property type="match status" value="1"/>
</dbReference>
<dbReference type="Gene3D" id="1.10.132.30">
    <property type="match status" value="1"/>
</dbReference>
<dbReference type="Gene3D" id="1.10.150.390">
    <property type="match status" value="1"/>
</dbReference>
<dbReference type="Gene3D" id="1.10.1790.20">
    <property type="match status" value="1"/>
</dbReference>
<dbReference type="Gene3D" id="1.10.40.90">
    <property type="match status" value="1"/>
</dbReference>
<dbReference type="Gene3D" id="2.40.40.20">
    <property type="match status" value="1"/>
</dbReference>
<dbReference type="Gene3D" id="2.40.50.100">
    <property type="match status" value="1"/>
</dbReference>
<dbReference type="Gene3D" id="4.10.860.120">
    <property type="entry name" value="RNA polymerase II, clamp domain"/>
    <property type="match status" value="1"/>
</dbReference>
<dbReference type="Gene3D" id="1.10.274.100">
    <property type="entry name" value="RNA polymerase Rpb1, domain 3"/>
    <property type="match status" value="1"/>
</dbReference>
<dbReference type="HAMAP" id="MF_01322">
    <property type="entry name" value="RNApol_bact_RpoC"/>
    <property type="match status" value="1"/>
</dbReference>
<dbReference type="InterPro" id="IPR045867">
    <property type="entry name" value="DNA-dir_RpoC_beta_prime"/>
</dbReference>
<dbReference type="InterPro" id="IPR012754">
    <property type="entry name" value="DNA-dir_RpoC_beta_prime_bact"/>
</dbReference>
<dbReference type="InterPro" id="IPR000722">
    <property type="entry name" value="RNA_pol_asu"/>
</dbReference>
<dbReference type="InterPro" id="IPR006592">
    <property type="entry name" value="RNA_pol_N"/>
</dbReference>
<dbReference type="InterPro" id="IPR007080">
    <property type="entry name" value="RNA_pol_Rpb1_1"/>
</dbReference>
<dbReference type="InterPro" id="IPR007066">
    <property type="entry name" value="RNA_pol_Rpb1_3"/>
</dbReference>
<dbReference type="InterPro" id="IPR042102">
    <property type="entry name" value="RNA_pol_Rpb1_3_sf"/>
</dbReference>
<dbReference type="InterPro" id="IPR007083">
    <property type="entry name" value="RNA_pol_Rpb1_4"/>
</dbReference>
<dbReference type="InterPro" id="IPR007081">
    <property type="entry name" value="RNA_pol_Rpb1_5"/>
</dbReference>
<dbReference type="InterPro" id="IPR044893">
    <property type="entry name" value="RNA_pol_Rpb1_clamp_domain"/>
</dbReference>
<dbReference type="InterPro" id="IPR038120">
    <property type="entry name" value="Rpb1_funnel_sf"/>
</dbReference>
<dbReference type="NCBIfam" id="TIGR02386">
    <property type="entry name" value="rpoC_TIGR"/>
    <property type="match status" value="1"/>
</dbReference>
<dbReference type="PANTHER" id="PTHR19376">
    <property type="entry name" value="DNA-DIRECTED RNA POLYMERASE"/>
    <property type="match status" value="1"/>
</dbReference>
<dbReference type="PANTHER" id="PTHR19376:SF54">
    <property type="entry name" value="DNA-DIRECTED RNA POLYMERASE SUBUNIT BETA"/>
    <property type="match status" value="1"/>
</dbReference>
<dbReference type="Pfam" id="PF04997">
    <property type="entry name" value="RNA_pol_Rpb1_1"/>
    <property type="match status" value="1"/>
</dbReference>
<dbReference type="Pfam" id="PF00623">
    <property type="entry name" value="RNA_pol_Rpb1_2"/>
    <property type="match status" value="2"/>
</dbReference>
<dbReference type="Pfam" id="PF04983">
    <property type="entry name" value="RNA_pol_Rpb1_3"/>
    <property type="match status" value="1"/>
</dbReference>
<dbReference type="Pfam" id="PF05000">
    <property type="entry name" value="RNA_pol_Rpb1_4"/>
    <property type="match status" value="1"/>
</dbReference>
<dbReference type="Pfam" id="PF04998">
    <property type="entry name" value="RNA_pol_Rpb1_5"/>
    <property type="match status" value="1"/>
</dbReference>
<dbReference type="SMART" id="SM00663">
    <property type="entry name" value="RPOLA_N"/>
    <property type="match status" value="1"/>
</dbReference>
<dbReference type="SUPFAM" id="SSF64484">
    <property type="entry name" value="beta and beta-prime subunits of DNA dependent RNA-polymerase"/>
    <property type="match status" value="1"/>
</dbReference>
<keyword id="KW-0240">DNA-directed RNA polymerase</keyword>
<keyword id="KW-0460">Magnesium</keyword>
<keyword id="KW-0479">Metal-binding</keyword>
<keyword id="KW-0548">Nucleotidyltransferase</keyword>
<keyword id="KW-0804">Transcription</keyword>
<keyword id="KW-0808">Transferase</keyword>
<keyword id="KW-0862">Zinc</keyword>
<accession>A7Z0N0</accession>
<gene>
    <name evidence="1" type="primary">rpoC</name>
    <name type="ordered locus">RBAM_001330</name>
</gene>
<organism>
    <name type="scientific">Bacillus velezensis (strain DSM 23117 / BGSC 10A6 / LMG 26770 / FZB42)</name>
    <name type="common">Bacillus amyloliquefaciens subsp. plantarum</name>
    <dbReference type="NCBI Taxonomy" id="326423"/>
    <lineage>
        <taxon>Bacteria</taxon>
        <taxon>Bacillati</taxon>
        <taxon>Bacillota</taxon>
        <taxon>Bacilli</taxon>
        <taxon>Bacillales</taxon>
        <taxon>Bacillaceae</taxon>
        <taxon>Bacillus</taxon>
        <taxon>Bacillus amyloliquefaciens group</taxon>
    </lineage>
</organism>
<feature type="chain" id="PRO_0000353291" description="DNA-directed RNA polymerase subunit beta'">
    <location>
        <begin position="1"/>
        <end position="1199"/>
    </location>
</feature>
<feature type="binding site" evidence="1">
    <location>
        <position position="60"/>
    </location>
    <ligand>
        <name>Zn(2+)</name>
        <dbReference type="ChEBI" id="CHEBI:29105"/>
        <label>1</label>
    </ligand>
</feature>
<feature type="binding site" evidence="1">
    <location>
        <position position="62"/>
    </location>
    <ligand>
        <name>Zn(2+)</name>
        <dbReference type="ChEBI" id="CHEBI:29105"/>
        <label>1</label>
    </ligand>
</feature>
<feature type="binding site" evidence="1">
    <location>
        <position position="75"/>
    </location>
    <ligand>
        <name>Zn(2+)</name>
        <dbReference type="ChEBI" id="CHEBI:29105"/>
        <label>1</label>
    </ligand>
</feature>
<feature type="binding site" evidence="1">
    <location>
        <position position="78"/>
    </location>
    <ligand>
        <name>Zn(2+)</name>
        <dbReference type="ChEBI" id="CHEBI:29105"/>
        <label>1</label>
    </ligand>
</feature>
<feature type="binding site" evidence="1">
    <location>
        <position position="449"/>
    </location>
    <ligand>
        <name>Mg(2+)</name>
        <dbReference type="ChEBI" id="CHEBI:18420"/>
    </ligand>
</feature>
<feature type="binding site" evidence="1">
    <location>
        <position position="451"/>
    </location>
    <ligand>
        <name>Mg(2+)</name>
        <dbReference type="ChEBI" id="CHEBI:18420"/>
    </ligand>
</feature>
<feature type="binding site" evidence="1">
    <location>
        <position position="453"/>
    </location>
    <ligand>
        <name>Mg(2+)</name>
        <dbReference type="ChEBI" id="CHEBI:18420"/>
    </ligand>
</feature>
<feature type="binding site" evidence="1">
    <location>
        <position position="818"/>
    </location>
    <ligand>
        <name>Zn(2+)</name>
        <dbReference type="ChEBI" id="CHEBI:29105"/>
        <label>2</label>
    </ligand>
</feature>
<feature type="binding site" evidence="1">
    <location>
        <position position="892"/>
    </location>
    <ligand>
        <name>Zn(2+)</name>
        <dbReference type="ChEBI" id="CHEBI:29105"/>
        <label>2</label>
    </ligand>
</feature>
<feature type="binding site" evidence="1">
    <location>
        <position position="899"/>
    </location>
    <ligand>
        <name>Zn(2+)</name>
        <dbReference type="ChEBI" id="CHEBI:29105"/>
        <label>2</label>
    </ligand>
</feature>
<feature type="binding site" evidence="1">
    <location>
        <position position="902"/>
    </location>
    <ligand>
        <name>Zn(2+)</name>
        <dbReference type="ChEBI" id="CHEBI:29105"/>
        <label>2</label>
    </ligand>
</feature>
<protein>
    <recommendedName>
        <fullName evidence="1">DNA-directed RNA polymerase subunit beta'</fullName>
        <shortName evidence="1">RNAP subunit beta'</shortName>
        <ecNumber evidence="1">2.7.7.6</ecNumber>
    </recommendedName>
    <alternativeName>
        <fullName evidence="1">RNA polymerase subunit beta'</fullName>
    </alternativeName>
    <alternativeName>
        <fullName evidence="1">Transcriptase subunit beta'</fullName>
    </alternativeName>
</protein>
<name>RPOC_BACVZ</name>
<comment type="function">
    <text evidence="1">DNA-dependent RNA polymerase catalyzes the transcription of DNA into RNA using the four ribonucleoside triphosphates as substrates.</text>
</comment>
<comment type="catalytic activity">
    <reaction evidence="1">
        <text>RNA(n) + a ribonucleoside 5'-triphosphate = RNA(n+1) + diphosphate</text>
        <dbReference type="Rhea" id="RHEA:21248"/>
        <dbReference type="Rhea" id="RHEA-COMP:14527"/>
        <dbReference type="Rhea" id="RHEA-COMP:17342"/>
        <dbReference type="ChEBI" id="CHEBI:33019"/>
        <dbReference type="ChEBI" id="CHEBI:61557"/>
        <dbReference type="ChEBI" id="CHEBI:140395"/>
        <dbReference type="EC" id="2.7.7.6"/>
    </reaction>
</comment>
<comment type="cofactor">
    <cofactor evidence="1">
        <name>Mg(2+)</name>
        <dbReference type="ChEBI" id="CHEBI:18420"/>
    </cofactor>
    <text evidence="1">Binds 1 Mg(2+) ion per subunit.</text>
</comment>
<comment type="cofactor">
    <cofactor evidence="1">
        <name>Zn(2+)</name>
        <dbReference type="ChEBI" id="CHEBI:29105"/>
    </cofactor>
    <text evidence="1">Binds 2 Zn(2+) ions per subunit.</text>
</comment>
<comment type="subunit">
    <text evidence="1">The RNAP catalytic core consists of 2 alpha, 1 beta, 1 beta' and 1 omega subunit. When a sigma factor is associated with the core the holoenzyme is formed, which can initiate transcription.</text>
</comment>
<comment type="similarity">
    <text evidence="1">Belongs to the RNA polymerase beta' chain family.</text>
</comment>
<sequence>MLDVNNFEYMNIGLASPDKIRSWSFGEVKKPETINYRTLKPEKDGLFCERIFGPTKDWECHCGKYKRVRYKGVVCDRCGVEVTRAKVRRERMGHIELAAPVSHIWYFKGIPSRMGLVLDMSPRALEEVIYFASYVVTDPANTPLEKKQLLSEKEYRAYLDKYGNKFQASMGAEAINKLLQDIDLVKEVDMLKEELKTSQGQRRTRAIKRLEVLEAFRNSGNKPSWMILDVLPVIPPELRPMVQLDGGRFATSDLNDLYRRVINRNNRLKRLLDLGAPSIIVQNEKRMLQEAVDALIDNGRRGRPVTGPGNRPLKSLSHMLKGKQGRFRQNLLGKRVDYSGRSVIVVGPHLKMYQCGLPKEMALELFKPFVMKELVEKGLAHNIKSAKRKIERVQPEVWDVLESVIKEHPVLLNRAPTLHRLGIQAFEPTLVEGRAIRLHPLVCTAYNADFDGDQMAVHVPLSAEAQAEARILMLAAQNILNPKDGKPVVTPSQDMVLGNYYLTLERAGAVGEGMVFKNTDEALLAYQNGYVHLHTRVAVAANSLKNVTFTEEQRSKLLITTVGKLVFNEILPESFPYMNEPTKSNIEEKTPDRFFLDKGADVKAVIAEQPINAPFKKGILGKIIAEIFKRFHITETSKMLDRMKNLGFRYSTKAGITVGVSDIVVLDDKQEILEEAQSKVDNVLKQFRRGLITEEERYERVISIWSSAKDVIQGKLMKSLDEVNPIYMMSDSGARGNASNFTQLAGMRGLMANPAGRIIELPIKSSFREGLTVLEYFISTHGARKGLADTALKTADSGYLTRRLVDVAQDVIIRETDCGTDRGILAKPLKEGTEIIERLEERLIGRFARKQIKHPETGAVLINENELIDEDKALEIVEAGIEEVWIRSAFTCNTPHGVCKRCYGRNLATGTDVEVGEAVGIIAAQSIGEPGTQLTMRTFHTGGVAGDDITQGLPRIQELFEARNPKGQATISEIDGTIAEINEVRDKQQEIVVQGAVETRSYTAPYNSRLKVAEGDQITRGQVLTEGSIDPKELLKVTDLTTVQEYLLHEVQKVYRMQGVEIGDKHVEVMVRQMLRKVRVIDAGDTDVLPGTLLDIHQFTEANKKVLLEGNRPATGRPVLLGITKASLETDSFLSAASFQETTRVLTDAAIKGKRDELLGLKENVIIGKLVPAGTGMMNYRKVKPVSNVQPTEDMVPAE</sequence>
<evidence type="ECO:0000255" key="1">
    <source>
        <dbReference type="HAMAP-Rule" id="MF_01322"/>
    </source>
</evidence>
<proteinExistence type="inferred from homology"/>
<reference key="1">
    <citation type="journal article" date="2007" name="Nat. Biotechnol.">
        <title>Comparative analysis of the complete genome sequence of the plant growth-promoting bacterium Bacillus amyloliquefaciens FZB42.</title>
        <authorList>
            <person name="Chen X.H."/>
            <person name="Koumoutsi A."/>
            <person name="Scholz R."/>
            <person name="Eisenreich A."/>
            <person name="Schneider K."/>
            <person name="Heinemeyer I."/>
            <person name="Morgenstern B."/>
            <person name="Voss B."/>
            <person name="Hess W.R."/>
            <person name="Reva O."/>
            <person name="Junge H."/>
            <person name="Voigt B."/>
            <person name="Jungblut P.R."/>
            <person name="Vater J."/>
            <person name="Suessmuth R."/>
            <person name="Liesegang H."/>
            <person name="Strittmatter A."/>
            <person name="Gottschalk G."/>
            <person name="Borriss R."/>
        </authorList>
    </citation>
    <scope>NUCLEOTIDE SEQUENCE [LARGE SCALE GENOMIC DNA]</scope>
    <source>
        <strain>DSM 23117 / BGSC 10A6 / LMG 26770 / FZB42</strain>
    </source>
</reference>